<reference key="1">
    <citation type="journal article" date="2009" name="PLoS Genet.">
        <title>The complete genome and proteome of Laribacter hongkongensis reveal potential mechanisms for adaptations to different temperatures and habitats.</title>
        <authorList>
            <person name="Woo P.C.Y."/>
            <person name="Lau S.K.P."/>
            <person name="Tse H."/>
            <person name="Teng J.L.L."/>
            <person name="Curreem S.O."/>
            <person name="Tsang A.K.L."/>
            <person name="Fan R.Y.Y."/>
            <person name="Wong G.K.M."/>
            <person name="Huang Y."/>
            <person name="Loman N.J."/>
            <person name="Snyder L.A.S."/>
            <person name="Cai J.J."/>
            <person name="Huang J.-D."/>
            <person name="Mak W."/>
            <person name="Pallen M.J."/>
            <person name="Lok S."/>
            <person name="Yuen K.-Y."/>
        </authorList>
    </citation>
    <scope>NUCLEOTIDE SEQUENCE [LARGE SCALE GENOMIC DNA]</scope>
    <source>
        <strain>HLHK9</strain>
    </source>
</reference>
<proteinExistence type="inferred from homology"/>
<feature type="chain" id="PRO_1000149416" description="3-isopropylmalate dehydratase small subunit">
    <location>
        <begin position="1"/>
        <end position="212"/>
    </location>
</feature>
<gene>
    <name evidence="1" type="primary">leuD</name>
    <name type="ordered locus">LHK_00704</name>
</gene>
<evidence type="ECO:0000255" key="1">
    <source>
        <dbReference type="HAMAP-Rule" id="MF_01031"/>
    </source>
</evidence>
<dbReference type="EC" id="4.2.1.33" evidence="1"/>
<dbReference type="EMBL" id="CP001154">
    <property type="protein sequence ID" value="ACO73697.1"/>
    <property type="molecule type" value="Genomic_DNA"/>
</dbReference>
<dbReference type="RefSeq" id="WP_012696189.1">
    <property type="nucleotide sequence ID" value="NC_012559.1"/>
</dbReference>
<dbReference type="SMR" id="C1DD62"/>
<dbReference type="STRING" id="557598.LHK_00704"/>
<dbReference type="GeneID" id="75109029"/>
<dbReference type="KEGG" id="lhk:LHK_00704"/>
<dbReference type="eggNOG" id="COG0066">
    <property type="taxonomic scope" value="Bacteria"/>
</dbReference>
<dbReference type="HOGENOM" id="CLU_081378_0_3_4"/>
<dbReference type="UniPathway" id="UPA00048">
    <property type="reaction ID" value="UER00071"/>
</dbReference>
<dbReference type="Proteomes" id="UP000002010">
    <property type="component" value="Chromosome"/>
</dbReference>
<dbReference type="GO" id="GO:0009316">
    <property type="term" value="C:3-isopropylmalate dehydratase complex"/>
    <property type="evidence" value="ECO:0007669"/>
    <property type="project" value="InterPro"/>
</dbReference>
<dbReference type="GO" id="GO:0003861">
    <property type="term" value="F:3-isopropylmalate dehydratase activity"/>
    <property type="evidence" value="ECO:0007669"/>
    <property type="project" value="UniProtKB-UniRule"/>
</dbReference>
<dbReference type="GO" id="GO:0009098">
    <property type="term" value="P:L-leucine biosynthetic process"/>
    <property type="evidence" value="ECO:0007669"/>
    <property type="project" value="UniProtKB-UniRule"/>
</dbReference>
<dbReference type="CDD" id="cd01577">
    <property type="entry name" value="IPMI_Swivel"/>
    <property type="match status" value="1"/>
</dbReference>
<dbReference type="FunFam" id="3.20.19.10:FF:000003">
    <property type="entry name" value="3-isopropylmalate dehydratase small subunit"/>
    <property type="match status" value="1"/>
</dbReference>
<dbReference type="Gene3D" id="3.20.19.10">
    <property type="entry name" value="Aconitase, domain 4"/>
    <property type="match status" value="1"/>
</dbReference>
<dbReference type="HAMAP" id="MF_01031">
    <property type="entry name" value="LeuD_type1"/>
    <property type="match status" value="1"/>
</dbReference>
<dbReference type="InterPro" id="IPR004431">
    <property type="entry name" value="3-IsopropMal_deHydase_ssu"/>
</dbReference>
<dbReference type="InterPro" id="IPR015928">
    <property type="entry name" value="Aconitase/3IPM_dehydase_swvl"/>
</dbReference>
<dbReference type="InterPro" id="IPR000573">
    <property type="entry name" value="AconitaseA/IPMdHydase_ssu_swvl"/>
</dbReference>
<dbReference type="InterPro" id="IPR033940">
    <property type="entry name" value="IPMI_Swivel"/>
</dbReference>
<dbReference type="InterPro" id="IPR050075">
    <property type="entry name" value="LeuD"/>
</dbReference>
<dbReference type="NCBIfam" id="TIGR00171">
    <property type="entry name" value="leuD"/>
    <property type="match status" value="1"/>
</dbReference>
<dbReference type="NCBIfam" id="NF002458">
    <property type="entry name" value="PRK01641.1"/>
    <property type="match status" value="1"/>
</dbReference>
<dbReference type="PANTHER" id="PTHR43345:SF5">
    <property type="entry name" value="3-ISOPROPYLMALATE DEHYDRATASE SMALL SUBUNIT"/>
    <property type="match status" value="1"/>
</dbReference>
<dbReference type="PANTHER" id="PTHR43345">
    <property type="entry name" value="3-ISOPROPYLMALATE DEHYDRATASE SMALL SUBUNIT 2-RELATED-RELATED"/>
    <property type="match status" value="1"/>
</dbReference>
<dbReference type="Pfam" id="PF00694">
    <property type="entry name" value="Aconitase_C"/>
    <property type="match status" value="1"/>
</dbReference>
<dbReference type="SUPFAM" id="SSF52016">
    <property type="entry name" value="LeuD/IlvD-like"/>
    <property type="match status" value="1"/>
</dbReference>
<accession>C1DD62</accession>
<name>LEUD_LARHH</name>
<sequence length="212" mass="23984">MKAFTRLTGLVCPLDRANVDTDAIIPKQFLKSIQRSGFGPNLFDEWRYLDHGEPGMDNSIRPQNPDFVLNFPRYQGAQILLARENFGCGSSREHAPWALDDYGFRVVIAPSFADIFFNNCYKNGLLPIVLPAEVMDRLFAGCEASEGYRLTVDLAAQTVTTPQGDSFGFDITEHRKHCLLNGLDEIGLTLRHAGEIKAFEDNRRQTQPWLFR</sequence>
<protein>
    <recommendedName>
        <fullName evidence="1">3-isopropylmalate dehydratase small subunit</fullName>
        <ecNumber evidence="1">4.2.1.33</ecNumber>
    </recommendedName>
    <alternativeName>
        <fullName evidence="1">Alpha-IPM isomerase</fullName>
        <shortName evidence="1">IPMI</shortName>
    </alternativeName>
    <alternativeName>
        <fullName evidence="1">Isopropylmalate isomerase</fullName>
    </alternativeName>
</protein>
<organism>
    <name type="scientific">Laribacter hongkongensis (strain HLHK9)</name>
    <dbReference type="NCBI Taxonomy" id="557598"/>
    <lineage>
        <taxon>Bacteria</taxon>
        <taxon>Pseudomonadati</taxon>
        <taxon>Pseudomonadota</taxon>
        <taxon>Betaproteobacteria</taxon>
        <taxon>Neisseriales</taxon>
        <taxon>Aquaspirillaceae</taxon>
        <taxon>Laribacter</taxon>
    </lineage>
</organism>
<keyword id="KW-0028">Amino-acid biosynthesis</keyword>
<keyword id="KW-0100">Branched-chain amino acid biosynthesis</keyword>
<keyword id="KW-0432">Leucine biosynthesis</keyword>
<keyword id="KW-0456">Lyase</keyword>
<keyword id="KW-1185">Reference proteome</keyword>
<comment type="function">
    <text evidence="1">Catalyzes the isomerization between 2-isopropylmalate and 3-isopropylmalate, via the formation of 2-isopropylmaleate.</text>
</comment>
<comment type="catalytic activity">
    <reaction evidence="1">
        <text>(2R,3S)-3-isopropylmalate = (2S)-2-isopropylmalate</text>
        <dbReference type="Rhea" id="RHEA:32287"/>
        <dbReference type="ChEBI" id="CHEBI:1178"/>
        <dbReference type="ChEBI" id="CHEBI:35121"/>
        <dbReference type="EC" id="4.2.1.33"/>
    </reaction>
</comment>
<comment type="pathway">
    <text evidence="1">Amino-acid biosynthesis; L-leucine biosynthesis; L-leucine from 3-methyl-2-oxobutanoate: step 2/4.</text>
</comment>
<comment type="subunit">
    <text evidence="1">Heterodimer of LeuC and LeuD.</text>
</comment>
<comment type="similarity">
    <text evidence="1">Belongs to the LeuD family. LeuD type 1 subfamily.</text>
</comment>